<proteinExistence type="inferred from homology"/>
<keyword id="KW-0687">Ribonucleoprotein</keyword>
<keyword id="KW-0689">Ribosomal protein</keyword>
<keyword id="KW-0694">RNA-binding</keyword>
<keyword id="KW-0699">rRNA-binding</keyword>
<reference key="1">
    <citation type="submission" date="2008-06" db="EMBL/GenBank/DDBJ databases">
        <title>Complete sequence of Chlorobium phaeobacteroides BS1.</title>
        <authorList>
            <consortium name="US DOE Joint Genome Institute"/>
            <person name="Lucas S."/>
            <person name="Copeland A."/>
            <person name="Lapidus A."/>
            <person name="Glavina del Rio T."/>
            <person name="Dalin E."/>
            <person name="Tice H."/>
            <person name="Bruce D."/>
            <person name="Goodwin L."/>
            <person name="Pitluck S."/>
            <person name="Schmutz J."/>
            <person name="Larimer F."/>
            <person name="Land M."/>
            <person name="Hauser L."/>
            <person name="Kyrpides N."/>
            <person name="Ovchinnikova G."/>
            <person name="Li T."/>
            <person name="Liu Z."/>
            <person name="Zhao F."/>
            <person name="Overmann J."/>
            <person name="Bryant D.A."/>
            <person name="Richardson P."/>
        </authorList>
    </citation>
    <scope>NUCLEOTIDE SEQUENCE [LARGE SCALE GENOMIC DNA]</scope>
    <source>
        <strain>BS1</strain>
    </source>
</reference>
<dbReference type="EMBL" id="CP001101">
    <property type="protein sequence ID" value="ACE05185.1"/>
    <property type="molecule type" value="Genomic_DNA"/>
</dbReference>
<dbReference type="SMR" id="B3EP46"/>
<dbReference type="STRING" id="331678.Cphamn1_2281"/>
<dbReference type="KEGG" id="cpb:Cphamn1_2281"/>
<dbReference type="eggNOG" id="COG0097">
    <property type="taxonomic scope" value="Bacteria"/>
</dbReference>
<dbReference type="HOGENOM" id="CLU_065464_1_2_10"/>
<dbReference type="OrthoDB" id="9805007at2"/>
<dbReference type="GO" id="GO:0022625">
    <property type="term" value="C:cytosolic large ribosomal subunit"/>
    <property type="evidence" value="ECO:0007669"/>
    <property type="project" value="TreeGrafter"/>
</dbReference>
<dbReference type="GO" id="GO:0019843">
    <property type="term" value="F:rRNA binding"/>
    <property type="evidence" value="ECO:0007669"/>
    <property type="project" value="UniProtKB-UniRule"/>
</dbReference>
<dbReference type="GO" id="GO:0003735">
    <property type="term" value="F:structural constituent of ribosome"/>
    <property type="evidence" value="ECO:0007669"/>
    <property type="project" value="InterPro"/>
</dbReference>
<dbReference type="GO" id="GO:0002181">
    <property type="term" value="P:cytoplasmic translation"/>
    <property type="evidence" value="ECO:0007669"/>
    <property type="project" value="TreeGrafter"/>
</dbReference>
<dbReference type="FunFam" id="3.90.930.12:FF:000001">
    <property type="entry name" value="50S ribosomal protein L6"/>
    <property type="match status" value="1"/>
</dbReference>
<dbReference type="FunFam" id="3.90.930.12:FF:000002">
    <property type="entry name" value="50S ribosomal protein L6"/>
    <property type="match status" value="1"/>
</dbReference>
<dbReference type="Gene3D" id="3.90.930.12">
    <property type="entry name" value="Ribosomal protein L6, alpha-beta domain"/>
    <property type="match status" value="2"/>
</dbReference>
<dbReference type="HAMAP" id="MF_01365_B">
    <property type="entry name" value="Ribosomal_uL6_B"/>
    <property type="match status" value="1"/>
</dbReference>
<dbReference type="InterPro" id="IPR000702">
    <property type="entry name" value="Ribosomal_uL6-like"/>
</dbReference>
<dbReference type="InterPro" id="IPR036789">
    <property type="entry name" value="Ribosomal_uL6-like_a/b-dom_sf"/>
</dbReference>
<dbReference type="InterPro" id="IPR020040">
    <property type="entry name" value="Ribosomal_uL6_a/b-dom"/>
</dbReference>
<dbReference type="InterPro" id="IPR019906">
    <property type="entry name" value="Ribosomal_uL6_bac-type"/>
</dbReference>
<dbReference type="NCBIfam" id="TIGR03654">
    <property type="entry name" value="L6_bact"/>
    <property type="match status" value="1"/>
</dbReference>
<dbReference type="PANTHER" id="PTHR11655">
    <property type="entry name" value="60S/50S RIBOSOMAL PROTEIN L6/L9"/>
    <property type="match status" value="1"/>
</dbReference>
<dbReference type="PANTHER" id="PTHR11655:SF14">
    <property type="entry name" value="LARGE RIBOSOMAL SUBUNIT PROTEIN UL6M"/>
    <property type="match status" value="1"/>
</dbReference>
<dbReference type="Pfam" id="PF00347">
    <property type="entry name" value="Ribosomal_L6"/>
    <property type="match status" value="2"/>
</dbReference>
<dbReference type="PIRSF" id="PIRSF002162">
    <property type="entry name" value="Ribosomal_L6"/>
    <property type="match status" value="1"/>
</dbReference>
<dbReference type="PRINTS" id="PR00059">
    <property type="entry name" value="RIBOSOMALL6"/>
</dbReference>
<dbReference type="SUPFAM" id="SSF56053">
    <property type="entry name" value="Ribosomal protein L6"/>
    <property type="match status" value="2"/>
</dbReference>
<sequence length="179" mass="19767">MSRIGKMPIKLAEQAKIEIKDNVISVSGPKGNLEQRLVPEVTVDIADGQVAVTRIDDSKRSRAMHGLYRMLISNMLEGVTSGFSKKLLINGVGFRAEKKAEFLALTLGYSHMIYFKAPEEIAIECPDPTSIVVSGIDKALVGQVAAKIRSFRKPEPYRGKGIRYSDEFVRRKEGKTAGK</sequence>
<protein>
    <recommendedName>
        <fullName evidence="1">Large ribosomal subunit protein uL6</fullName>
    </recommendedName>
    <alternativeName>
        <fullName evidence="2">50S ribosomal protein L6</fullName>
    </alternativeName>
</protein>
<accession>B3EP46</accession>
<gene>
    <name evidence="1" type="primary">rplF</name>
    <name type="ordered locus">Cphamn1_2281</name>
</gene>
<comment type="function">
    <text evidence="1">This protein binds to the 23S rRNA, and is important in its secondary structure. It is located near the subunit interface in the base of the L7/L12 stalk, and near the tRNA binding site of the peptidyltransferase center.</text>
</comment>
<comment type="subunit">
    <text evidence="1">Part of the 50S ribosomal subunit.</text>
</comment>
<comment type="similarity">
    <text evidence="1">Belongs to the universal ribosomal protein uL6 family.</text>
</comment>
<organism>
    <name type="scientific">Chlorobium phaeobacteroides (strain BS1)</name>
    <dbReference type="NCBI Taxonomy" id="331678"/>
    <lineage>
        <taxon>Bacteria</taxon>
        <taxon>Pseudomonadati</taxon>
        <taxon>Chlorobiota</taxon>
        <taxon>Chlorobiia</taxon>
        <taxon>Chlorobiales</taxon>
        <taxon>Chlorobiaceae</taxon>
        <taxon>Chlorobium/Pelodictyon group</taxon>
        <taxon>Chlorobium</taxon>
    </lineage>
</organism>
<evidence type="ECO:0000255" key="1">
    <source>
        <dbReference type="HAMAP-Rule" id="MF_01365"/>
    </source>
</evidence>
<evidence type="ECO:0000305" key="2"/>
<name>RL6_CHLPB</name>
<feature type="chain" id="PRO_1000143959" description="Large ribosomal subunit protein uL6">
    <location>
        <begin position="1"/>
        <end position="179"/>
    </location>
</feature>